<comment type="function">
    <text evidence="3 4 5 6 7">Cytochrome P450 involved in brassinosteroids (BRs) inactivation and regulation of BRs homeostasis. Inactivates the BRs castasterone (CS) and brassinolide (BL) through carbon 26 hydroxylation. Acts in association with CYP72C1 to inactivate BRs and modulate photomorphogenesis.</text>
</comment>
<comment type="cofactor">
    <cofactor evidence="1">
        <name>heme</name>
        <dbReference type="ChEBI" id="CHEBI:30413"/>
    </cofactor>
</comment>
<comment type="subcellular location">
    <subcellularLocation>
        <location evidence="2">Membrane</location>
        <topology evidence="2">Single-pass membrane protein</topology>
    </subcellularLocation>
</comment>
<comment type="induction">
    <text evidence="4 6">By brassinolide (BL), auxin and dark treatment.</text>
</comment>
<comment type="disruption phenotype">
    <text evidence="4 5">No visible phenotype under normal growth condition, but reduced responsiveness of hypocotyls to light and increased responsiveness to brassinolide (BL). Strong reduction of C-26 hydroxylase activity.</text>
</comment>
<comment type="miscellaneous">
    <text>Plants overexpressing CYP734A1 exhibit severe dwarfism.</text>
</comment>
<comment type="similarity">
    <text evidence="8">Belongs to the cytochrome P450 family.</text>
</comment>
<accession>O48786</accession>
<feature type="chain" id="PRO_0000411195" description="Cytochrome P450 734A1">
    <location>
        <begin position="1"/>
        <end position="520"/>
    </location>
</feature>
<feature type="transmembrane region" description="Helical" evidence="2">
    <location>
        <begin position="13"/>
        <end position="33"/>
    </location>
</feature>
<feature type="binding site" description="axial binding residue" evidence="1">
    <location>
        <position position="463"/>
    </location>
    <ligand>
        <name>heme</name>
        <dbReference type="ChEBI" id="CHEBI:30413"/>
    </ligand>
    <ligandPart>
        <name>Fe</name>
        <dbReference type="ChEBI" id="CHEBI:18248"/>
    </ligandPart>
</feature>
<reference key="1">
    <citation type="journal article" date="1999" name="Nature">
        <title>Sequence and analysis of chromosome 2 of the plant Arabidopsis thaliana.</title>
        <authorList>
            <person name="Lin X."/>
            <person name="Kaul S."/>
            <person name="Rounsley S.D."/>
            <person name="Shea T.P."/>
            <person name="Benito M.-I."/>
            <person name="Town C.D."/>
            <person name="Fujii C.Y."/>
            <person name="Mason T.M."/>
            <person name="Bowman C.L."/>
            <person name="Barnstead M.E."/>
            <person name="Feldblyum T.V."/>
            <person name="Buell C.R."/>
            <person name="Ketchum K.A."/>
            <person name="Lee J.J."/>
            <person name="Ronning C.M."/>
            <person name="Koo H.L."/>
            <person name="Moffat K.S."/>
            <person name="Cronin L.A."/>
            <person name="Shen M."/>
            <person name="Pai G."/>
            <person name="Van Aken S."/>
            <person name="Umayam L."/>
            <person name="Tallon L.J."/>
            <person name="Gill J.E."/>
            <person name="Adams M.D."/>
            <person name="Carrera A.J."/>
            <person name="Creasy T.H."/>
            <person name="Goodman H.M."/>
            <person name="Somerville C.R."/>
            <person name="Copenhaver G.P."/>
            <person name="Preuss D."/>
            <person name="Nierman W.C."/>
            <person name="White O."/>
            <person name="Eisen J.A."/>
            <person name="Salzberg S.L."/>
            <person name="Fraser C.M."/>
            <person name="Venter J.C."/>
        </authorList>
    </citation>
    <scope>NUCLEOTIDE SEQUENCE [LARGE SCALE GENOMIC DNA]</scope>
    <source>
        <strain>cv. Columbia</strain>
    </source>
</reference>
<reference key="2">
    <citation type="journal article" date="2017" name="Plant J.">
        <title>Araport11: a complete reannotation of the Arabidopsis thaliana reference genome.</title>
        <authorList>
            <person name="Cheng C.Y."/>
            <person name="Krishnakumar V."/>
            <person name="Chan A.P."/>
            <person name="Thibaud-Nissen F."/>
            <person name="Schobel S."/>
            <person name="Town C.D."/>
        </authorList>
    </citation>
    <scope>GENOME REANNOTATION</scope>
    <source>
        <strain>cv. Columbia</strain>
    </source>
</reference>
<reference key="3">
    <citation type="journal article" date="2003" name="Science">
        <title>Empirical analysis of transcriptional activity in the Arabidopsis genome.</title>
        <authorList>
            <person name="Yamada K."/>
            <person name="Lim J."/>
            <person name="Dale J.M."/>
            <person name="Chen H."/>
            <person name="Shinn P."/>
            <person name="Palm C.J."/>
            <person name="Southwick A.M."/>
            <person name="Wu H.C."/>
            <person name="Kim C.J."/>
            <person name="Nguyen M."/>
            <person name="Pham P.K."/>
            <person name="Cheuk R.F."/>
            <person name="Karlin-Newmann G."/>
            <person name="Liu S.X."/>
            <person name="Lam B."/>
            <person name="Sakano H."/>
            <person name="Wu T."/>
            <person name="Yu G."/>
            <person name="Miranda M."/>
            <person name="Quach H.L."/>
            <person name="Tripp M."/>
            <person name="Chang C.H."/>
            <person name="Lee J.M."/>
            <person name="Toriumi M.J."/>
            <person name="Chan M.M."/>
            <person name="Tang C.C."/>
            <person name="Onodera C.S."/>
            <person name="Deng J.M."/>
            <person name="Akiyama K."/>
            <person name="Ansari Y."/>
            <person name="Arakawa T."/>
            <person name="Banh J."/>
            <person name="Banno F."/>
            <person name="Bowser L."/>
            <person name="Brooks S.Y."/>
            <person name="Carninci P."/>
            <person name="Chao Q."/>
            <person name="Choy N."/>
            <person name="Enju A."/>
            <person name="Goldsmith A.D."/>
            <person name="Gurjal M."/>
            <person name="Hansen N.F."/>
            <person name="Hayashizaki Y."/>
            <person name="Johnson-Hopson C."/>
            <person name="Hsuan V.W."/>
            <person name="Iida K."/>
            <person name="Karnes M."/>
            <person name="Khan S."/>
            <person name="Koesema E."/>
            <person name="Ishida J."/>
            <person name="Jiang P.X."/>
            <person name="Jones T."/>
            <person name="Kawai J."/>
            <person name="Kamiya A."/>
            <person name="Meyers C."/>
            <person name="Nakajima M."/>
            <person name="Narusaka M."/>
            <person name="Seki M."/>
            <person name="Sakurai T."/>
            <person name="Satou M."/>
            <person name="Tamse R."/>
            <person name="Vaysberg M."/>
            <person name="Wallender E.K."/>
            <person name="Wong C."/>
            <person name="Yamamura Y."/>
            <person name="Yuan S."/>
            <person name="Shinozaki K."/>
            <person name="Davis R.W."/>
            <person name="Theologis A."/>
            <person name="Ecker J.R."/>
        </authorList>
    </citation>
    <scope>NUCLEOTIDE SEQUENCE [LARGE SCALE MRNA]</scope>
    <source>
        <strain>cv. Columbia</strain>
    </source>
</reference>
<reference key="4">
    <citation type="submission" date="2006-07" db="EMBL/GenBank/DDBJ databases">
        <title>Large-scale analysis of RIKEN Arabidopsis full-length (RAFL) cDNAs.</title>
        <authorList>
            <person name="Totoki Y."/>
            <person name="Seki M."/>
            <person name="Ishida J."/>
            <person name="Nakajima M."/>
            <person name="Enju A."/>
            <person name="Kamiya A."/>
            <person name="Narusaka M."/>
            <person name="Shin-i T."/>
            <person name="Nakagawa M."/>
            <person name="Sakamoto N."/>
            <person name="Oishi K."/>
            <person name="Kohara Y."/>
            <person name="Kobayashi M."/>
            <person name="Toyoda A."/>
            <person name="Sakaki Y."/>
            <person name="Sakurai T."/>
            <person name="Iida K."/>
            <person name="Akiyama K."/>
            <person name="Satou M."/>
            <person name="Toyoda T."/>
            <person name="Konagaya A."/>
            <person name="Carninci P."/>
            <person name="Kawai J."/>
            <person name="Hayashizaki Y."/>
            <person name="Shinozaki K."/>
        </authorList>
    </citation>
    <scope>NUCLEOTIDE SEQUENCE [LARGE SCALE MRNA]</scope>
    <source>
        <strain>cv. Columbia</strain>
    </source>
</reference>
<reference key="5">
    <citation type="journal article" date="1999" name="Proc. Natl. Acad. Sci. U.S.A.">
        <title>BAS1: A gene regulating brassinosteroid levels and light responsiveness in Arabidopsis.</title>
        <authorList>
            <person name="Neff M.M."/>
            <person name="Nguyen S.M."/>
            <person name="Malancharuvil E.J."/>
            <person name="Fujioka S."/>
            <person name="Noguchi T."/>
            <person name="Seto H."/>
            <person name="Tsubuki M."/>
            <person name="Honda T."/>
            <person name="Takatsuto S."/>
            <person name="Yoshida S."/>
            <person name="Chory J."/>
        </authorList>
    </citation>
    <scope>FUNCTION</scope>
</reference>
<reference key="6">
    <citation type="journal article" date="2003" name="Plant Physiol.">
        <title>CYP72B1 inactivates brassinosteroid hormones: an intersection between photomorphogenesis and plant steroid signal transduction.</title>
        <authorList>
            <person name="Turk E.M."/>
            <person name="Fujioka S."/>
            <person name="Seto H."/>
            <person name="Shimada Y."/>
            <person name="Takatsuto S."/>
            <person name="Yoshida S."/>
            <person name="Denzel M.A."/>
            <person name="Torres Q.I."/>
            <person name="Neff M.M."/>
        </authorList>
    </citation>
    <scope>FUNCTION</scope>
    <scope>TISSUE SPECIFICITY</scope>
    <scope>INDUCTION</scope>
    <scope>DISRUPTION PHENOTYPE</scope>
    <source>
        <strain>cv. Wassilewskija-2</strain>
    </source>
</reference>
<reference key="7">
    <citation type="journal article" date="2005" name="Plant J.">
        <title>BAS1 and SOB7 act redundantly to modulate Arabidopsis photomorphogenesis via unique brassinosteroid inactivation mechanisms.</title>
        <authorList>
            <person name="Turk E.M."/>
            <person name="Fujioka S."/>
            <person name="Seto H."/>
            <person name="Shimada Y."/>
            <person name="Takatsuto S."/>
            <person name="Yoshida S."/>
            <person name="Wang H."/>
            <person name="Torres Q.I."/>
            <person name="Ward J.M."/>
            <person name="Murthy G."/>
            <person name="Zhang J."/>
            <person name="Walker J.C."/>
            <person name="Neff M.M."/>
        </authorList>
    </citation>
    <scope>FUNCTION</scope>
    <scope>TISSUE SPECIFICITY</scope>
    <scope>DISRUPTION PHENOTYPE</scope>
</reference>
<reference key="8">
    <citation type="journal article" date="2010" name="Mol. Cells">
        <title>A transcriptional feedback loop modulating signaling crosstalks between auxin and brassinosteroid in Arabidopsis.</title>
        <authorList>
            <person name="Jung J.H."/>
            <person name="Lee M."/>
            <person name="Park C.M."/>
        </authorList>
    </citation>
    <scope>FUNCTION</scope>
    <scope>INDUCTION</scope>
</reference>
<reference key="9">
    <citation type="journal article" date="2010" name="Plant Mol. Biol.">
        <title>Arabidopsis CYP72C1 is an atypical cytochrome P450 that inactivates brassinosteroids.</title>
        <authorList>
            <person name="Thornton L.E."/>
            <person name="Rupasinghe S.G."/>
            <person name="Peng H."/>
            <person name="Schuler M.A."/>
            <person name="Neff M.M."/>
        </authorList>
    </citation>
    <scope>FUNCTION</scope>
</reference>
<protein>
    <recommendedName>
        <fullName>Cytochrome P450 734A1</fullName>
        <ecNumber>1.14.-.-</ecNumber>
    </recommendedName>
    <alternativeName>
        <fullName>Protein PHYB ACTIVATION-TAGGED SUPPRESSOR 1</fullName>
    </alternativeName>
</protein>
<organism>
    <name type="scientific">Arabidopsis thaliana</name>
    <name type="common">Mouse-ear cress</name>
    <dbReference type="NCBI Taxonomy" id="3702"/>
    <lineage>
        <taxon>Eukaryota</taxon>
        <taxon>Viridiplantae</taxon>
        <taxon>Streptophyta</taxon>
        <taxon>Embryophyta</taxon>
        <taxon>Tracheophyta</taxon>
        <taxon>Spermatophyta</taxon>
        <taxon>Magnoliopsida</taxon>
        <taxon>eudicotyledons</taxon>
        <taxon>Gunneridae</taxon>
        <taxon>Pentapetalae</taxon>
        <taxon>rosids</taxon>
        <taxon>malvids</taxon>
        <taxon>Brassicales</taxon>
        <taxon>Brassicaceae</taxon>
        <taxon>Camelineae</taxon>
        <taxon>Arabidopsis</taxon>
    </lineage>
</organism>
<dbReference type="EC" id="1.14.-.-"/>
<dbReference type="EMBL" id="AC003105">
    <property type="protein sequence ID" value="AAB95305.1"/>
    <property type="molecule type" value="Genomic_DNA"/>
</dbReference>
<dbReference type="EMBL" id="CP002685">
    <property type="protein sequence ID" value="AEC07878.1"/>
    <property type="molecule type" value="Genomic_DNA"/>
</dbReference>
<dbReference type="EMBL" id="BT010564">
    <property type="protein sequence ID" value="AAQ65187.1"/>
    <property type="molecule type" value="mRNA"/>
</dbReference>
<dbReference type="EMBL" id="AK175232">
    <property type="protein sequence ID" value="BAD42995.1"/>
    <property type="molecule type" value="mRNA"/>
</dbReference>
<dbReference type="EMBL" id="AK229743">
    <property type="protein sequence ID" value="BAF01580.1"/>
    <property type="molecule type" value="mRNA"/>
</dbReference>
<dbReference type="PIR" id="H84663">
    <property type="entry name" value="H84663"/>
</dbReference>
<dbReference type="RefSeq" id="NP_180239.1">
    <property type="nucleotide sequence ID" value="NM_128228.4"/>
</dbReference>
<dbReference type="SMR" id="O48786"/>
<dbReference type="FunCoup" id="O48786">
    <property type="interactions" value="320"/>
</dbReference>
<dbReference type="STRING" id="3702.O48786"/>
<dbReference type="PaxDb" id="3702-AT2G26710.1"/>
<dbReference type="ProteomicsDB" id="240266"/>
<dbReference type="EnsemblPlants" id="AT2G26710.1">
    <property type="protein sequence ID" value="AT2G26710.1"/>
    <property type="gene ID" value="AT2G26710"/>
</dbReference>
<dbReference type="GeneID" id="817212"/>
<dbReference type="Gramene" id="AT2G26710.1">
    <property type="protein sequence ID" value="AT2G26710.1"/>
    <property type="gene ID" value="AT2G26710"/>
</dbReference>
<dbReference type="KEGG" id="ath:AT2G26710"/>
<dbReference type="Araport" id="AT2G26710"/>
<dbReference type="TAIR" id="AT2G26710">
    <property type="gene designation" value="BAS1"/>
</dbReference>
<dbReference type="eggNOG" id="KOG0157">
    <property type="taxonomic scope" value="Eukaryota"/>
</dbReference>
<dbReference type="HOGENOM" id="CLU_001570_5_0_1"/>
<dbReference type="InParanoid" id="O48786"/>
<dbReference type="OMA" id="WKHQRRT"/>
<dbReference type="OrthoDB" id="1470350at2759"/>
<dbReference type="PhylomeDB" id="O48786"/>
<dbReference type="PRO" id="PR:O48786"/>
<dbReference type="Proteomes" id="UP000006548">
    <property type="component" value="Chromosome 2"/>
</dbReference>
<dbReference type="ExpressionAtlas" id="O48786">
    <property type="expression patterns" value="baseline and differential"/>
</dbReference>
<dbReference type="GO" id="GO:0016020">
    <property type="term" value="C:membrane"/>
    <property type="evidence" value="ECO:0007669"/>
    <property type="project" value="UniProtKB-SubCell"/>
</dbReference>
<dbReference type="GO" id="GO:0020037">
    <property type="term" value="F:heme binding"/>
    <property type="evidence" value="ECO:0007669"/>
    <property type="project" value="InterPro"/>
</dbReference>
<dbReference type="GO" id="GO:0005506">
    <property type="term" value="F:iron ion binding"/>
    <property type="evidence" value="ECO:0007669"/>
    <property type="project" value="InterPro"/>
</dbReference>
<dbReference type="GO" id="GO:0016705">
    <property type="term" value="F:oxidoreductase activity, acting on paired donors, with incorporation or reduction of molecular oxygen"/>
    <property type="evidence" value="ECO:0007669"/>
    <property type="project" value="InterPro"/>
</dbReference>
<dbReference type="GO" id="GO:0008395">
    <property type="term" value="F:steroid hydroxylase activity"/>
    <property type="evidence" value="ECO:0000315"/>
    <property type="project" value="TAIR"/>
</dbReference>
<dbReference type="GO" id="GO:0010268">
    <property type="term" value="P:brassinosteroid homeostasis"/>
    <property type="evidence" value="ECO:0000270"/>
    <property type="project" value="TAIR"/>
</dbReference>
<dbReference type="GO" id="GO:0016131">
    <property type="term" value="P:brassinosteroid metabolic process"/>
    <property type="evidence" value="ECO:0000314"/>
    <property type="project" value="TAIR"/>
</dbReference>
<dbReference type="GO" id="GO:0009741">
    <property type="term" value="P:response to brassinosteroid"/>
    <property type="evidence" value="ECO:0000270"/>
    <property type="project" value="TAIR"/>
</dbReference>
<dbReference type="CDD" id="cd20639">
    <property type="entry name" value="CYP734"/>
    <property type="match status" value="1"/>
</dbReference>
<dbReference type="FunFam" id="1.10.630.10:FF:000029">
    <property type="entry name" value="Cytochrome P450 734A1"/>
    <property type="match status" value="1"/>
</dbReference>
<dbReference type="Gene3D" id="1.10.630.10">
    <property type="entry name" value="Cytochrome P450"/>
    <property type="match status" value="1"/>
</dbReference>
<dbReference type="InterPro" id="IPR001128">
    <property type="entry name" value="Cyt_P450"/>
</dbReference>
<dbReference type="InterPro" id="IPR017972">
    <property type="entry name" value="Cyt_P450_CS"/>
</dbReference>
<dbReference type="InterPro" id="IPR002401">
    <property type="entry name" value="Cyt_P450_E_grp-I"/>
</dbReference>
<dbReference type="InterPro" id="IPR036396">
    <property type="entry name" value="Cyt_P450_sf"/>
</dbReference>
<dbReference type="InterPro" id="IPR050665">
    <property type="entry name" value="Cytochrome_P450_Monooxygen"/>
</dbReference>
<dbReference type="PANTHER" id="PTHR24282:SF224">
    <property type="entry name" value="CYTOCHROME P450 734A1"/>
    <property type="match status" value="1"/>
</dbReference>
<dbReference type="PANTHER" id="PTHR24282">
    <property type="entry name" value="CYTOCHROME P450 FAMILY MEMBER"/>
    <property type="match status" value="1"/>
</dbReference>
<dbReference type="Pfam" id="PF00067">
    <property type="entry name" value="p450"/>
    <property type="match status" value="1"/>
</dbReference>
<dbReference type="PRINTS" id="PR00463">
    <property type="entry name" value="EP450I"/>
</dbReference>
<dbReference type="PRINTS" id="PR00385">
    <property type="entry name" value="P450"/>
</dbReference>
<dbReference type="SUPFAM" id="SSF48264">
    <property type="entry name" value="Cytochrome P450"/>
    <property type="match status" value="1"/>
</dbReference>
<dbReference type="PROSITE" id="PS00086">
    <property type="entry name" value="CYTOCHROME_P450"/>
    <property type="match status" value="1"/>
</dbReference>
<gene>
    <name type="primary">CYP734A1</name>
    <name type="synonym">BAS1</name>
    <name type="ordered locus">At2g26710</name>
    <name type="ORF">F18A8.8</name>
</gene>
<proteinExistence type="evidence at transcript level"/>
<keyword id="KW-0341">Growth regulation</keyword>
<keyword id="KW-0349">Heme</keyword>
<keyword id="KW-0408">Iron</keyword>
<keyword id="KW-0472">Membrane</keyword>
<keyword id="KW-0479">Metal-binding</keyword>
<keyword id="KW-0503">Monooxygenase</keyword>
<keyword id="KW-0560">Oxidoreductase</keyword>
<keyword id="KW-1185">Reference proteome</keyword>
<keyword id="KW-0812">Transmembrane</keyword>
<keyword id="KW-1133">Transmembrane helix</keyword>
<evidence type="ECO:0000250" key="1"/>
<evidence type="ECO:0000255" key="2"/>
<evidence type="ECO:0000269" key="3">
    <source>
    </source>
</evidence>
<evidence type="ECO:0000269" key="4">
    <source>
    </source>
</evidence>
<evidence type="ECO:0000269" key="5">
    <source>
    </source>
</evidence>
<evidence type="ECO:0000269" key="6">
    <source>
    </source>
</evidence>
<evidence type="ECO:0000269" key="7">
    <source>
    </source>
</evidence>
<evidence type="ECO:0000305" key="8"/>
<sequence length="520" mass="59490">MEEESSSWFIPKVLVLSVILSLVIVKGMSLLWWRPRKIEEHFSKQGIRGPPYHFFIGNVKELVGMMLKASSHPMPFSHNILPRVLSFYHHWRKIYGATFLVWFGPTFRLTVADPDLIREIFSKSEFYEKNEAHPLVKQLEGDGLLSLKGEKWAHHRKIISPTFHMENLKLLVPVVLKSVTDMVDKWSDKLSENGEVEVDVYEWFQILTEDVISRTAFGSSYEDGRAVFRLQAQQMLLCAEAFQKVFIPGYRFFPTRGNLKSWKLDKEIRKSLLKLIERRRQNAIDGEGEECKEPAAKDLLGLMIQAKNVTVQDIVEECKSFFFAGKQTTSNLLTWTTILLSMHPEWQAKARDEVLRVCGSRDVPTKDHVVKLKTLSMILNESLRLYPPIVATIRRAKSDVKLGGYKIPCGTELLIPIIAVHHDQAIWGNDVNEFNPARFADGVPRAAKHPVGFIPFGLGVRTCIGQNLAILQAKLTLAVMIQRFTFHLAPTYQHAPTVLMLLYPQHGAPITFRRLTNHED</sequence>
<name>C734A_ARATH</name>